<gene>
    <name type="primary">Cel</name>
</gene>
<evidence type="ECO:0000250" key="1"/>
<evidence type="ECO:0000250" key="2">
    <source>
        <dbReference type="UniProtKB" id="P19835"/>
    </source>
</evidence>
<evidence type="ECO:0000250" key="3">
    <source>
        <dbReference type="UniProtKB" id="Q64285"/>
    </source>
</evidence>
<evidence type="ECO:0000255" key="4"/>
<evidence type="ECO:0000255" key="5">
    <source>
        <dbReference type="PROSITE-ProRule" id="PRU10039"/>
    </source>
</evidence>
<evidence type="ECO:0000256" key="6">
    <source>
        <dbReference type="SAM" id="MobiDB-lite"/>
    </source>
</evidence>
<evidence type="ECO:0000269" key="7">
    <source>
    </source>
</evidence>
<evidence type="ECO:0000269" key="8">
    <source>
    </source>
</evidence>
<evidence type="ECO:0000305" key="9"/>
<evidence type="ECO:0000305" key="10">
    <source>
    </source>
</evidence>
<evidence type="ECO:0000305" key="11">
    <source>
    </source>
</evidence>
<name>CEL_RAT</name>
<organism>
    <name type="scientific">Rattus norvegicus</name>
    <name type="common">Rat</name>
    <dbReference type="NCBI Taxonomy" id="10116"/>
    <lineage>
        <taxon>Eukaryota</taxon>
        <taxon>Metazoa</taxon>
        <taxon>Chordata</taxon>
        <taxon>Craniata</taxon>
        <taxon>Vertebrata</taxon>
        <taxon>Euteleostomi</taxon>
        <taxon>Mammalia</taxon>
        <taxon>Eutheria</taxon>
        <taxon>Euarchontoglires</taxon>
        <taxon>Glires</taxon>
        <taxon>Rodentia</taxon>
        <taxon>Myomorpha</taxon>
        <taxon>Muroidea</taxon>
        <taxon>Muridae</taxon>
        <taxon>Murinae</taxon>
        <taxon>Rattus</taxon>
    </lineage>
</organism>
<reference key="1">
    <citation type="journal article" date="1989" name="Biochim. Biophys. Acta">
        <title>Molecular cloning and expression of cDNA for rat pancreatic cholesterol esterase.</title>
        <authorList>
            <person name="Kissel J.A."/>
            <person name="Fontaine R.N."/>
            <person name="Turck C.W."/>
            <person name="Brockman H.L."/>
            <person name="Hui D.Y."/>
        </authorList>
    </citation>
    <scope>NUCLEOTIDE SEQUENCE [MRNA]</scope>
    <source>
        <strain>Sprague-Dawley</strain>
        <tissue>Pancreas</tissue>
    </source>
</reference>
<reference key="2">
    <citation type="journal article" date="1987" name="Biochemistry">
        <title>Isolation of full-length putative rat lysophospholipase cDNA using improved methods for mRNA isolation and cDNA cloning.</title>
        <authorList>
            <person name="Han J.H."/>
            <person name="Stratowa C."/>
            <person name="Rutter W.J."/>
        </authorList>
    </citation>
    <scope>NUCLEOTIDE SEQUENCE [MRNA]</scope>
</reference>
<reference key="3">
    <citation type="journal article" date="1991" name="Biochemistry">
        <title>Structure of the rat pancreatic cholesterol esterase gene.</title>
        <authorList>
            <person name="Fontaine R.N."/>
            <person name="Carter C.P."/>
            <person name="Hui D.Y."/>
        </authorList>
    </citation>
    <scope>NUCLEOTIDE SEQUENCE [GENOMIC DNA]</scope>
</reference>
<reference key="4">
    <citation type="journal article" date="1990" name="J. Biol. Chem.">
        <title>Identification of the active site serine in pancreatic cholesterol esterase by chemical modification and site-specific mutagenesis.</title>
        <authorList>
            <person name="Dipersio L.P."/>
            <person name="Fontaine R.N."/>
            <person name="Hui D.Y."/>
        </authorList>
    </citation>
    <scope>FUNCTION</scope>
    <scope>CATALYTIC ACTIVITY</scope>
    <scope>ACTIVE SITE SER-214</scope>
    <scope>MUTAGENESIS OF SER-214</scope>
</reference>
<reference key="5">
    <citation type="journal article" date="1991" name="J. Biol. Chem.">
        <title>Site-specific mutagenesis of an essential histidine residue in pancreatic cholesterol esterase.</title>
        <authorList>
            <person name="Dipersio L.P."/>
            <person name="Fontaine R.N."/>
            <person name="Hui D.Y."/>
        </authorList>
    </citation>
    <scope>FUNCTION</scope>
    <scope>CATALYTIC ACTIVITY</scope>
    <scope>ACTIVE SITE HIS-455</scope>
    <scope>MUTAGENESIS OF HIS-440 AND HIS-455</scope>
</reference>
<proteinExistence type="evidence at protein level"/>
<protein>
    <recommendedName>
        <fullName>Bile salt-activated lipase</fullName>
        <shortName>BAL</shortName>
        <ecNumber evidence="2">3.1.1.13</ecNumber>
        <ecNumber evidence="2">3.1.1.3</ecNumber>
        <ecNumber evidence="2">3.1.1.6</ecNumber>
    </recommendedName>
    <alternativeName>
        <fullName>Bile salt-stimulated lipase</fullName>
        <shortName>BSSL</shortName>
    </alternativeName>
    <alternativeName>
        <fullName>Carboxyl ester lipase</fullName>
    </alternativeName>
    <alternativeName>
        <fullName>Cholesterol esterase</fullName>
    </alternativeName>
    <alternativeName>
        <fullName>Pancreatic lysophospholipase</fullName>
    </alternativeName>
    <alternativeName>
        <fullName>Sterol esterase</fullName>
    </alternativeName>
</protein>
<accession>P07882</accession>
<accession>P14722</accession>
<dbReference type="EC" id="3.1.1.13" evidence="2"/>
<dbReference type="EC" id="3.1.1.3" evidence="2"/>
<dbReference type="EC" id="3.1.1.6" evidence="2"/>
<dbReference type="EMBL" id="X16054">
    <property type="protein sequence ID" value="CAA34189.1"/>
    <property type="molecule type" value="mRNA"/>
</dbReference>
<dbReference type="EMBL" id="M15893">
    <property type="protein sequence ID" value="AAA41540.1"/>
    <property type="molecule type" value="mRNA"/>
</dbReference>
<dbReference type="EMBL" id="M69157">
    <property type="protein sequence ID" value="AAB46376.1"/>
    <property type="molecule type" value="Genomic_DNA"/>
</dbReference>
<dbReference type="PIR" id="A34967">
    <property type="entry name" value="A34967"/>
</dbReference>
<dbReference type="SMR" id="P07882"/>
<dbReference type="FunCoup" id="P07882">
    <property type="interactions" value="9"/>
</dbReference>
<dbReference type="STRING" id="10116.ENSRNOP00000014572"/>
<dbReference type="ESTHER" id="ratno-balip">
    <property type="family name" value="Cholesterol_esterase"/>
</dbReference>
<dbReference type="MEROPS" id="S09.985"/>
<dbReference type="GlyCosmos" id="P07882">
    <property type="glycosylation" value="1 site, No reported glycans"/>
</dbReference>
<dbReference type="GlyGen" id="P07882">
    <property type="glycosylation" value="3 sites"/>
</dbReference>
<dbReference type="PhosphoSitePlus" id="P07882"/>
<dbReference type="PaxDb" id="10116-ENSRNOP00000014572"/>
<dbReference type="UCSC" id="RGD:2331">
    <property type="organism name" value="rat"/>
</dbReference>
<dbReference type="AGR" id="RGD:2331"/>
<dbReference type="RGD" id="2331">
    <property type="gene designation" value="Cel"/>
</dbReference>
<dbReference type="eggNOG" id="KOG1516">
    <property type="taxonomic scope" value="Eukaryota"/>
</dbReference>
<dbReference type="InParanoid" id="P07882"/>
<dbReference type="PhylomeDB" id="P07882"/>
<dbReference type="Reactome" id="R-RNO-192456">
    <property type="pathway name" value="Digestion of dietary lipid"/>
</dbReference>
<dbReference type="PRO" id="PR:P07882"/>
<dbReference type="Proteomes" id="UP000002494">
    <property type="component" value="Unplaced"/>
</dbReference>
<dbReference type="GO" id="GO:0005737">
    <property type="term" value="C:cytoplasm"/>
    <property type="evidence" value="ECO:0000314"/>
    <property type="project" value="UniProtKB"/>
</dbReference>
<dbReference type="GO" id="GO:0005783">
    <property type="term" value="C:endoplasmic reticulum"/>
    <property type="evidence" value="ECO:0000266"/>
    <property type="project" value="RGD"/>
</dbReference>
<dbReference type="GO" id="GO:0005615">
    <property type="term" value="C:extracellular space"/>
    <property type="evidence" value="ECO:0000314"/>
    <property type="project" value="RGD"/>
</dbReference>
<dbReference type="GO" id="GO:0005794">
    <property type="term" value="C:Golgi apparatus"/>
    <property type="evidence" value="ECO:0000266"/>
    <property type="project" value="RGD"/>
</dbReference>
<dbReference type="GO" id="GO:0016020">
    <property type="term" value="C:membrane"/>
    <property type="evidence" value="ECO:0007669"/>
    <property type="project" value="GOC"/>
</dbReference>
<dbReference type="GO" id="GO:0032991">
    <property type="term" value="C:protein-containing complex"/>
    <property type="evidence" value="ECO:0000314"/>
    <property type="project" value="RGD"/>
</dbReference>
<dbReference type="GO" id="GO:0042588">
    <property type="term" value="C:zymogen granule"/>
    <property type="evidence" value="ECO:0000314"/>
    <property type="project" value="RGD"/>
</dbReference>
<dbReference type="GO" id="GO:0008126">
    <property type="term" value="F:acetylesterase activity"/>
    <property type="evidence" value="ECO:0007669"/>
    <property type="project" value="UniProtKB-EC"/>
</dbReference>
<dbReference type="GO" id="GO:0043208">
    <property type="term" value="F:glycosphingolipid binding"/>
    <property type="evidence" value="ECO:0000314"/>
    <property type="project" value="RGD"/>
</dbReference>
<dbReference type="GO" id="GO:0004622">
    <property type="term" value="F:lysophospholipase activity"/>
    <property type="evidence" value="ECO:0000314"/>
    <property type="project" value="RGD"/>
</dbReference>
<dbReference type="GO" id="GO:0044877">
    <property type="term" value="F:protein-containing complex binding"/>
    <property type="evidence" value="ECO:0000314"/>
    <property type="project" value="RGD"/>
</dbReference>
<dbReference type="GO" id="GO:0050253">
    <property type="term" value="F:retinyl-palmitate esterase activity"/>
    <property type="evidence" value="ECO:0000314"/>
    <property type="project" value="RGD"/>
</dbReference>
<dbReference type="GO" id="GO:0004771">
    <property type="term" value="F:sterol ester esterase activity"/>
    <property type="evidence" value="ECO:0000314"/>
    <property type="project" value="RGD"/>
</dbReference>
<dbReference type="GO" id="GO:0004806">
    <property type="term" value="F:triacylglycerol lipase activity"/>
    <property type="evidence" value="ECO:0000314"/>
    <property type="project" value="RGD"/>
</dbReference>
<dbReference type="GO" id="GO:0046514">
    <property type="term" value="P:ceramide catabolic process"/>
    <property type="evidence" value="ECO:0000266"/>
    <property type="project" value="RGD"/>
</dbReference>
<dbReference type="GO" id="GO:0030299">
    <property type="term" value="P:intestinal cholesterol absorption"/>
    <property type="evidence" value="ECO:0000266"/>
    <property type="project" value="RGD"/>
</dbReference>
<dbReference type="GO" id="GO:0030157">
    <property type="term" value="P:pancreatic juice secretion"/>
    <property type="evidence" value="ECO:0000266"/>
    <property type="project" value="RGD"/>
</dbReference>
<dbReference type="CDD" id="cd00312">
    <property type="entry name" value="Esterase_lipase"/>
    <property type="match status" value="1"/>
</dbReference>
<dbReference type="FunFam" id="3.40.50.1820:FF:000100">
    <property type="entry name" value="Carboxylic ester hydrolase"/>
    <property type="match status" value="1"/>
</dbReference>
<dbReference type="Gene3D" id="3.40.50.1820">
    <property type="entry name" value="alpha/beta hydrolase"/>
    <property type="match status" value="1"/>
</dbReference>
<dbReference type="InterPro" id="IPR029058">
    <property type="entry name" value="AB_hydrolase_fold"/>
</dbReference>
<dbReference type="InterPro" id="IPR002018">
    <property type="entry name" value="CarbesteraseB"/>
</dbReference>
<dbReference type="InterPro" id="IPR019826">
    <property type="entry name" value="Carboxylesterase_B_AS"/>
</dbReference>
<dbReference type="InterPro" id="IPR019819">
    <property type="entry name" value="Carboxylesterase_B_CS"/>
</dbReference>
<dbReference type="InterPro" id="IPR051093">
    <property type="entry name" value="Neuroligin/BSAL"/>
</dbReference>
<dbReference type="PANTHER" id="PTHR43903">
    <property type="entry name" value="NEUROLIGIN"/>
    <property type="match status" value="1"/>
</dbReference>
<dbReference type="Pfam" id="PF00135">
    <property type="entry name" value="COesterase"/>
    <property type="match status" value="1"/>
</dbReference>
<dbReference type="SUPFAM" id="SSF53474">
    <property type="entry name" value="alpha/beta-Hydrolases"/>
    <property type="match status" value="1"/>
</dbReference>
<dbReference type="PROSITE" id="PS00122">
    <property type="entry name" value="CARBOXYLESTERASE_B_1"/>
    <property type="match status" value="1"/>
</dbReference>
<dbReference type="PROSITE" id="PS00941">
    <property type="entry name" value="CARBOXYLESTERASE_B_2"/>
    <property type="match status" value="1"/>
</dbReference>
<keyword id="KW-1015">Disulfide bond</keyword>
<keyword id="KW-0325">Glycoprotein</keyword>
<keyword id="KW-0378">Hydrolase</keyword>
<keyword id="KW-0442">Lipid degradation</keyword>
<keyword id="KW-0443">Lipid metabolism</keyword>
<keyword id="KW-1185">Reference proteome</keyword>
<keyword id="KW-0677">Repeat</keyword>
<keyword id="KW-0964">Secreted</keyword>
<keyword id="KW-0719">Serine esterase</keyword>
<keyword id="KW-0732">Signal</keyword>
<feature type="signal peptide">
    <location>
        <begin position="1"/>
        <end position="20"/>
    </location>
</feature>
<feature type="chain" id="PRO_0000008633" description="Bile salt-activated lipase">
    <location>
        <begin position="21"/>
        <end position="612"/>
    </location>
</feature>
<feature type="repeat" description="1">
    <location>
        <begin position="556"/>
        <end position="566"/>
    </location>
</feature>
<feature type="repeat" description="2">
    <location>
        <begin position="567"/>
        <end position="577"/>
    </location>
</feature>
<feature type="repeat" description="3">
    <location>
        <begin position="578"/>
        <end position="588"/>
    </location>
</feature>
<feature type="repeat" description="4">
    <location>
        <begin position="589"/>
        <end position="599"/>
    </location>
</feature>
<feature type="region of interest" description="Disordered" evidence="6">
    <location>
        <begin position="553"/>
        <end position="612"/>
    </location>
</feature>
<feature type="region of interest" description="4 X 11 AA tandem repeats, O-glycosylated region">
    <location>
        <begin position="556"/>
        <end position="599"/>
    </location>
</feature>
<feature type="compositionally biased region" description="Polar residues" evidence="6">
    <location>
        <begin position="583"/>
        <end position="599"/>
    </location>
</feature>
<feature type="active site" description="Acyl-ester intermediate" evidence="5">
    <location>
        <position position="214"/>
    </location>
</feature>
<feature type="active site" description="Charge relay system" evidence="1">
    <location>
        <position position="340"/>
    </location>
</feature>
<feature type="active site" description="Charge relay system" evidence="1">
    <location>
        <position position="455"/>
    </location>
</feature>
<feature type="glycosylation site" description="N-linked (GlcNAc...) asparagine" evidence="4">
    <location>
        <position position="207"/>
    </location>
</feature>
<feature type="disulfide bond" evidence="1">
    <location>
        <begin position="84"/>
        <end position="100"/>
    </location>
</feature>
<feature type="disulfide bond" evidence="1">
    <location>
        <begin position="266"/>
        <end position="277"/>
    </location>
</feature>
<feature type="mutagenesis site" description="Abolishes activity." evidence="8">
    <original>S</original>
    <variation>T</variation>
    <variation>A</variation>
    <location>
        <position position="214"/>
    </location>
</feature>
<feature type="mutagenesis site" description="No effect on activity." evidence="7">
    <original>H</original>
    <variation>Q</variation>
    <location>
        <position position="440"/>
    </location>
</feature>
<feature type="mutagenesis site" description="Abolishes activity." evidence="7">
    <original>H</original>
    <variation>Q</variation>
    <variation>R</variation>
    <variation>A</variation>
    <variation>S</variation>
    <variation>D</variation>
    <location>
        <position position="455"/>
    </location>
</feature>
<feature type="sequence conflict" description="In Ref. 2; AAA41540." evidence="9" ref="2">
    <original>V</original>
    <variation>L</variation>
    <location>
        <position position="26"/>
    </location>
</feature>
<feature type="sequence conflict" description="In Ref. 2; AAA41540." evidence="9" ref="2">
    <original>G</original>
    <variation>A</variation>
    <location>
        <position position="154"/>
    </location>
</feature>
<feature type="sequence conflict" description="In Ref. 2; AAA41540." evidence="9" ref="2">
    <original>A</original>
    <variation>G</variation>
    <location>
        <position position="217"/>
    </location>
</feature>
<feature type="sequence conflict" description="In Ref. 2; AAA41540." evidence="9" ref="2">
    <original>S</original>
    <variation>I</variation>
    <location>
        <position position="219"/>
    </location>
</feature>
<feature type="sequence conflict" description="In Ref. 3; AAB46376." evidence="9" ref="3">
    <original>M</original>
    <variation>T</variation>
    <location>
        <position position="419"/>
    </location>
</feature>
<feature type="sequence conflict" description="In Ref. 2; AAA41540 and 3; AAB46376." evidence="9" ref="2 3">
    <original>T</original>
    <variation>M</variation>
    <location>
        <position position="513"/>
    </location>
</feature>
<feature type="sequence conflict" description="In Ref. 3; AAB46376." evidence="9" ref="3">
    <original>GG</original>
    <variation>VV</variation>
    <location>
        <begin position="576"/>
        <end position="577"/>
    </location>
</feature>
<feature type="sequence conflict" description="In Ref. 3; AAB46376." evidence="9" ref="3">
    <original>GP</original>
    <variation>VA</variation>
    <location>
        <begin position="608"/>
        <end position="609"/>
    </location>
</feature>
<feature type="sequence conflict" description="In Ref. 3; AAB46376." evidence="9" ref="3">
    <original>G</original>
    <variation>A</variation>
    <location>
        <position position="611"/>
    </location>
</feature>
<sequence>MGRLEVLFLGLTCCLAAACAAKLGAVYTEGGFVEGVNKKLSLLGGDSVDIFKGIPFATAKTLENPQRHPGWQGTLKATDFKKRCLQATITQDDTYGQEDCLYLNIWVPQGRKQVSHDLPVMVWIYGGAFLMGSGQGANFLKNYLYDGEEIATRGNVIVVTFNYRVGPLGFLSTGDANLPGNFGLRDQHMAIAWVKRNIAAFGGDPDNITIFGESAGAASVSLQTLSPYNKGLIRRAISQSGVALSPWAIQENPLFWAKTIAKKVGCPTEDTAKMAGCLKITDPRALTLAYRLPLKSQEYPIVHYLAFIPVVDGDFIPDDPINLYDNAADIDYLAGINDMDGHLFATVDVPAIDKAKQDVTEEDFYRLVSGHTVAKGLKGTQATFDIYTESWAQDPSQENMKKTVVAFETDILFLIPTEMALAQHRAHAKSAKTYSYLFSHPSRMPIYPKWMGADHADDLQYVFGKPFATPLGYRAQDRTVSKAMIAYWTNFAKSGDPNMGNSPVPTHWYPYTTENGNYLDINKKITSTSMKEHLREKFLKFWAVTFEMLPTVVGDHTPPEDDSEAAPVPPTDDSQGGPVPPTDDSQTTPVPPTDNSQAGDSVEAQMPGPIGF</sequence>
<comment type="function">
    <text evidence="2 3 7 8">Catalyzes the hydrolysis of a wide range of substrates including cholesteryl esters, phospholipids, lysophospholipids, di- and tri-acylglycerols, and fatty acid esters of hydroxy fatty acids (FAHFA) (PubMed:1999399, PubMed:2211595). Preferentially hydrolyzes FAHFAs with the ester bond further away from the carboxylate. Unsaturated FAHFAs are hydrolyzed more quickly than saturated FAHFAs (By similarity). Has an essential role in the complete digestion of dietary lipids and their intestinal absorption, along with the absorption of fat-soluble vitamins (By similarity).</text>
</comment>
<comment type="catalytic activity">
    <reaction evidence="2">
        <text>a triacylglycerol + H2O = a diacylglycerol + a fatty acid + H(+)</text>
        <dbReference type="Rhea" id="RHEA:12044"/>
        <dbReference type="ChEBI" id="CHEBI:15377"/>
        <dbReference type="ChEBI" id="CHEBI:15378"/>
        <dbReference type="ChEBI" id="CHEBI:17855"/>
        <dbReference type="ChEBI" id="CHEBI:18035"/>
        <dbReference type="ChEBI" id="CHEBI:28868"/>
        <dbReference type="EC" id="3.1.1.3"/>
    </reaction>
    <physiologicalReaction direction="left-to-right" evidence="2">
        <dbReference type="Rhea" id="RHEA:12045"/>
    </physiologicalReaction>
</comment>
<comment type="catalytic activity">
    <reaction evidence="2">
        <text>1,2,3-tri-(9Z-octadecenoyl)-glycerol + H2O = di-(9Z)-octadecenoylglycerol + (9Z)-octadecenoate + H(+)</text>
        <dbReference type="Rhea" id="RHEA:38575"/>
        <dbReference type="ChEBI" id="CHEBI:15377"/>
        <dbReference type="ChEBI" id="CHEBI:15378"/>
        <dbReference type="ChEBI" id="CHEBI:30823"/>
        <dbReference type="ChEBI" id="CHEBI:53753"/>
        <dbReference type="ChEBI" id="CHEBI:75945"/>
    </reaction>
    <physiologicalReaction direction="left-to-right" evidence="2">
        <dbReference type="Rhea" id="RHEA:38576"/>
    </physiologicalReaction>
</comment>
<comment type="catalytic activity">
    <reaction evidence="2">
        <text>1,2,3-trioctanoylglycerol + H2O = dioctanoylglycerol + octanoate + H(+)</text>
        <dbReference type="Rhea" id="RHEA:47864"/>
        <dbReference type="ChEBI" id="CHEBI:15377"/>
        <dbReference type="ChEBI" id="CHEBI:15378"/>
        <dbReference type="ChEBI" id="CHEBI:25646"/>
        <dbReference type="ChEBI" id="CHEBI:76978"/>
        <dbReference type="ChEBI" id="CHEBI:88066"/>
    </reaction>
    <physiologicalReaction direction="left-to-right" evidence="2">
        <dbReference type="Rhea" id="RHEA:47865"/>
    </physiologicalReaction>
</comment>
<comment type="catalytic activity">
    <reaction evidence="2">
        <text>a sterol ester + H2O = a sterol + a fatty acid + H(+)</text>
        <dbReference type="Rhea" id="RHEA:10100"/>
        <dbReference type="ChEBI" id="CHEBI:15377"/>
        <dbReference type="ChEBI" id="CHEBI:15378"/>
        <dbReference type="ChEBI" id="CHEBI:15889"/>
        <dbReference type="ChEBI" id="CHEBI:28868"/>
        <dbReference type="ChEBI" id="CHEBI:35915"/>
        <dbReference type="EC" id="3.1.1.13"/>
    </reaction>
    <physiologicalReaction direction="left-to-right" evidence="2">
        <dbReference type="Rhea" id="RHEA:10101"/>
    </physiologicalReaction>
</comment>
<comment type="catalytic activity">
    <reaction evidence="7 8">
        <text>cholesteryl (9Z-octadecenoate) + H2O = cholesterol + (9Z)-octadecenoate + H(+)</text>
        <dbReference type="Rhea" id="RHEA:33875"/>
        <dbReference type="ChEBI" id="CHEBI:15377"/>
        <dbReference type="ChEBI" id="CHEBI:15378"/>
        <dbReference type="ChEBI" id="CHEBI:16113"/>
        <dbReference type="ChEBI" id="CHEBI:30823"/>
        <dbReference type="ChEBI" id="CHEBI:46898"/>
    </reaction>
    <physiologicalReaction direction="left-to-right" evidence="10">
        <dbReference type="Rhea" id="RHEA:33876"/>
    </physiologicalReaction>
</comment>
<comment type="catalytic activity">
    <reaction evidence="2">
        <text>an acetyl ester + H2O = an aliphatic alcohol + acetate + H(+)</text>
        <dbReference type="Rhea" id="RHEA:12957"/>
        <dbReference type="ChEBI" id="CHEBI:2571"/>
        <dbReference type="ChEBI" id="CHEBI:15377"/>
        <dbReference type="ChEBI" id="CHEBI:15378"/>
        <dbReference type="ChEBI" id="CHEBI:30089"/>
        <dbReference type="ChEBI" id="CHEBI:47622"/>
        <dbReference type="EC" id="3.1.1.6"/>
    </reaction>
    <physiologicalReaction direction="left-to-right" evidence="2">
        <dbReference type="Rhea" id="RHEA:12958"/>
    </physiologicalReaction>
</comment>
<comment type="catalytic activity">
    <reaction evidence="7 8">
        <text>a butanoate ester + H2O = an aliphatic alcohol + butanoate + H(+)</text>
        <dbReference type="Rhea" id="RHEA:47348"/>
        <dbReference type="ChEBI" id="CHEBI:2571"/>
        <dbReference type="ChEBI" id="CHEBI:15377"/>
        <dbReference type="ChEBI" id="CHEBI:15378"/>
        <dbReference type="ChEBI" id="CHEBI:17968"/>
        <dbReference type="ChEBI" id="CHEBI:50477"/>
    </reaction>
    <physiologicalReaction direction="left-to-right" evidence="10">
        <dbReference type="Rhea" id="RHEA:47349"/>
    </physiologicalReaction>
</comment>
<comment type="catalytic activity">
    <reaction evidence="2">
        <text>9-hexadecanoyloxy-octadecanoate + H2O = 9-hydroxy-octadecanoate + hexadecanoate + H(+)</text>
        <dbReference type="Rhea" id="RHEA:52052"/>
        <dbReference type="ChEBI" id="CHEBI:7896"/>
        <dbReference type="ChEBI" id="CHEBI:15377"/>
        <dbReference type="ChEBI" id="CHEBI:15378"/>
        <dbReference type="ChEBI" id="CHEBI:83670"/>
        <dbReference type="ChEBI" id="CHEBI:136286"/>
    </reaction>
    <physiologicalReaction direction="left-to-right" evidence="2">
        <dbReference type="Rhea" id="RHEA:52053"/>
    </physiologicalReaction>
</comment>
<comment type="catalytic activity">
    <reaction evidence="2">
        <text>9-(9Z-octadecenoyloxy)-octadecanoate + H2O = 9-hydroxy-octadecanoate + (9Z)-octadecenoate + H(+)</text>
        <dbReference type="Rhea" id="RHEA:52048"/>
        <dbReference type="ChEBI" id="CHEBI:15377"/>
        <dbReference type="ChEBI" id="CHEBI:15378"/>
        <dbReference type="ChEBI" id="CHEBI:30823"/>
        <dbReference type="ChEBI" id="CHEBI:136282"/>
        <dbReference type="ChEBI" id="CHEBI:136286"/>
    </reaction>
    <physiologicalReaction direction="left-to-right" evidence="2">
        <dbReference type="Rhea" id="RHEA:52049"/>
    </physiologicalReaction>
</comment>
<comment type="catalytic activity">
    <reaction evidence="8">
        <text>1-hexadecanoyl-sn-glycero-3-phosphocholine + H2O = sn-glycerol 3-phosphocholine + hexadecanoate + H(+)</text>
        <dbReference type="Rhea" id="RHEA:40435"/>
        <dbReference type="ChEBI" id="CHEBI:7896"/>
        <dbReference type="ChEBI" id="CHEBI:15377"/>
        <dbReference type="ChEBI" id="CHEBI:15378"/>
        <dbReference type="ChEBI" id="CHEBI:16870"/>
        <dbReference type="ChEBI" id="CHEBI:72998"/>
    </reaction>
    <physiologicalReaction direction="left-to-right" evidence="11">
        <dbReference type="Rhea" id="RHEA:40436"/>
    </physiologicalReaction>
</comment>
<comment type="catalytic activity">
    <reaction evidence="3">
        <text>12-hexadecanoyloxy-octadecanoate + H2O = 12-hydroxyoctadecanoate + hexadecanoate + H(+)</text>
        <dbReference type="Rhea" id="RHEA:52056"/>
        <dbReference type="ChEBI" id="CHEBI:7896"/>
        <dbReference type="ChEBI" id="CHEBI:15377"/>
        <dbReference type="ChEBI" id="CHEBI:15378"/>
        <dbReference type="ChEBI" id="CHEBI:83677"/>
        <dbReference type="ChEBI" id="CHEBI:84201"/>
    </reaction>
    <physiologicalReaction direction="left-to-right" evidence="3">
        <dbReference type="Rhea" id="RHEA:52057"/>
    </physiologicalReaction>
</comment>
<comment type="catalytic activity">
    <reaction evidence="3">
        <text>12-(9Z-octadecenoyloxy)-octadecanoate + H2O = 12-hydroxyoctadecanoate + (9Z)-octadecenoate + H(+)</text>
        <dbReference type="Rhea" id="RHEA:52060"/>
        <dbReference type="ChEBI" id="CHEBI:15377"/>
        <dbReference type="ChEBI" id="CHEBI:15378"/>
        <dbReference type="ChEBI" id="CHEBI:30823"/>
        <dbReference type="ChEBI" id="CHEBI:84201"/>
        <dbReference type="ChEBI" id="CHEBI:136302"/>
    </reaction>
    <physiologicalReaction direction="left-to-right" evidence="3">
        <dbReference type="Rhea" id="RHEA:52061"/>
    </physiologicalReaction>
</comment>
<comment type="catalytic activity">
    <reaction evidence="3">
        <text>13-(9Z-octadecenoyloxy)-octadecanoate + H2O = 13-hydroxy-octadecanoate + (9Z)-octadecenoate + H(+)</text>
        <dbReference type="Rhea" id="RHEA:52064"/>
        <dbReference type="ChEBI" id="CHEBI:15377"/>
        <dbReference type="ChEBI" id="CHEBI:15378"/>
        <dbReference type="ChEBI" id="CHEBI:30823"/>
        <dbReference type="ChEBI" id="CHEBI:136303"/>
        <dbReference type="ChEBI" id="CHEBI:136304"/>
    </reaction>
    <physiologicalReaction direction="left-to-right" evidence="3">
        <dbReference type="Rhea" id="RHEA:52065"/>
    </physiologicalReaction>
</comment>
<comment type="catalytic activity">
    <reaction evidence="3">
        <text>9-(9Z-hexadecenoyloxy)-octadecanoate + H2O = (9Z)-hexadecenoate + 9-hydroxy-octadecanoate + H(+)</text>
        <dbReference type="Rhea" id="RHEA:52068"/>
        <dbReference type="ChEBI" id="CHEBI:15377"/>
        <dbReference type="ChEBI" id="CHEBI:15378"/>
        <dbReference type="ChEBI" id="CHEBI:32372"/>
        <dbReference type="ChEBI" id="CHEBI:136286"/>
        <dbReference type="ChEBI" id="CHEBI:136309"/>
    </reaction>
    <physiologicalReaction direction="left-to-right" evidence="3">
        <dbReference type="Rhea" id="RHEA:52069"/>
    </physiologicalReaction>
</comment>
<comment type="catalytic activity">
    <reaction evidence="3">
        <text>12-(9Z-hexadecenoyloxy)-octadecanoate + H2O = 12-hydroxyoctadecanoate + (9Z)-hexadecenoate + H(+)</text>
        <dbReference type="Rhea" id="RHEA:52072"/>
        <dbReference type="ChEBI" id="CHEBI:15377"/>
        <dbReference type="ChEBI" id="CHEBI:15378"/>
        <dbReference type="ChEBI" id="CHEBI:32372"/>
        <dbReference type="ChEBI" id="CHEBI:84201"/>
        <dbReference type="ChEBI" id="CHEBI:136312"/>
    </reaction>
    <physiologicalReaction direction="left-to-right" evidence="3">
        <dbReference type="Rhea" id="RHEA:52073"/>
    </physiologicalReaction>
</comment>
<comment type="catalytic activity">
    <reaction evidence="3">
        <text>13-(9Z-hexadecenoyloxy)-octadecanoate + H2O = 13-hydroxy-octadecanoate + (9Z)-hexadecenoate + H(+)</text>
        <dbReference type="Rhea" id="RHEA:52076"/>
        <dbReference type="ChEBI" id="CHEBI:15377"/>
        <dbReference type="ChEBI" id="CHEBI:15378"/>
        <dbReference type="ChEBI" id="CHEBI:32372"/>
        <dbReference type="ChEBI" id="CHEBI:136304"/>
        <dbReference type="ChEBI" id="CHEBI:136315"/>
    </reaction>
    <physiologicalReaction direction="left-to-right" evidence="3">
        <dbReference type="Rhea" id="RHEA:52077"/>
    </physiologicalReaction>
</comment>
<comment type="catalytic activity">
    <reaction evidence="3">
        <text>12-octadecanoyloxy-octadecanoate + H2O = 12-hydroxyoctadecanoate + octadecanoate + H(+)</text>
        <dbReference type="Rhea" id="RHEA:52080"/>
        <dbReference type="ChEBI" id="CHEBI:15377"/>
        <dbReference type="ChEBI" id="CHEBI:15378"/>
        <dbReference type="ChEBI" id="CHEBI:25629"/>
        <dbReference type="ChEBI" id="CHEBI:84201"/>
        <dbReference type="ChEBI" id="CHEBI:136330"/>
    </reaction>
    <physiologicalReaction direction="left-to-right" evidence="3">
        <dbReference type="Rhea" id="RHEA:52081"/>
    </physiologicalReaction>
</comment>
<comment type="catalytic activity">
    <reaction evidence="3">
        <text>13-octadecanoyloxy-octadecanoate + H2O = 13-hydroxy-octadecanoate + octadecanoate + H(+)</text>
        <dbReference type="Rhea" id="RHEA:52084"/>
        <dbReference type="ChEBI" id="CHEBI:15377"/>
        <dbReference type="ChEBI" id="CHEBI:15378"/>
        <dbReference type="ChEBI" id="CHEBI:25629"/>
        <dbReference type="ChEBI" id="CHEBI:136304"/>
        <dbReference type="ChEBI" id="CHEBI:136335"/>
    </reaction>
    <physiologicalReaction direction="left-to-right" evidence="3">
        <dbReference type="Rhea" id="RHEA:52085"/>
    </physiologicalReaction>
</comment>
<comment type="catalytic activity">
    <reaction evidence="3">
        <text>5-(9Z-hexadecenoyloxy)-octadecanoate + H2O = 5-hydroxy-octadecanoate + (9Z)-hexadecenoate + H(+)</text>
        <dbReference type="Rhea" id="RHEA:52092"/>
        <dbReference type="ChEBI" id="CHEBI:15377"/>
        <dbReference type="ChEBI" id="CHEBI:15378"/>
        <dbReference type="ChEBI" id="CHEBI:32372"/>
        <dbReference type="ChEBI" id="CHEBI:136369"/>
        <dbReference type="ChEBI" id="CHEBI:136370"/>
    </reaction>
    <physiologicalReaction direction="left-to-right" evidence="3">
        <dbReference type="Rhea" id="RHEA:52093"/>
    </physiologicalReaction>
</comment>
<comment type="catalytic activity">
    <reaction evidence="3">
        <text>9-octadecanoyloxy-octadecanoate + H2O = 9-hydroxy-octadecanoate + octadecanoate + H(+)</text>
        <dbReference type="Rhea" id="RHEA:52096"/>
        <dbReference type="ChEBI" id="CHEBI:15377"/>
        <dbReference type="ChEBI" id="CHEBI:15378"/>
        <dbReference type="ChEBI" id="CHEBI:25629"/>
        <dbReference type="ChEBI" id="CHEBI:136286"/>
        <dbReference type="ChEBI" id="CHEBI:136373"/>
    </reaction>
    <physiologicalReaction direction="left-to-right" evidence="3">
        <dbReference type="Rhea" id="RHEA:52097"/>
    </physiologicalReaction>
</comment>
<comment type="activity regulation">
    <text evidence="2">Activated by bile salts such as sodium taurocholate.</text>
</comment>
<comment type="subunit">
    <text evidence="1">Interacts with CLC.</text>
</comment>
<comment type="subcellular location">
    <subcellularLocation>
        <location evidence="2">Secreted</location>
    </subcellularLocation>
</comment>
<comment type="tissue specificity">
    <text>Synthesized primarily in the pancreas and then transported to the intestine.</text>
</comment>
<comment type="similarity">
    <text evidence="9">Belongs to the type-B carboxylesterase/lipase family.</text>
</comment>